<name>MRM2_DROME</name>
<sequence>MRLVFTGNCVFKRLLHTEIGGKYAKQQPRNLKGRSKSSQEWLTRQLADPYVEKARMMNYRCRSAFKLLEIDDKYGILRPGDTVLECGAAPGSWTQVAVERTNANGKQERAPQGAVFSIDLLHFHAVPGATIFGGMDFTSSLAQKRLREALQDRKVNCVLSDMAPNATGVRMLDQESITNLCYEVLRFALAMSAPQAHLVVKVWDNGDVPKLERDMLRFYEKVKRVKPRASRGDSAEHFLVARNFKGATDS</sequence>
<reference key="1">
    <citation type="journal article" date="2000" name="Science">
        <title>The genome sequence of Drosophila melanogaster.</title>
        <authorList>
            <person name="Adams M.D."/>
            <person name="Celniker S.E."/>
            <person name="Holt R.A."/>
            <person name="Evans C.A."/>
            <person name="Gocayne J.D."/>
            <person name="Amanatides P.G."/>
            <person name="Scherer S.E."/>
            <person name="Li P.W."/>
            <person name="Hoskins R.A."/>
            <person name="Galle R.F."/>
            <person name="George R.A."/>
            <person name="Lewis S.E."/>
            <person name="Richards S."/>
            <person name="Ashburner M."/>
            <person name="Henderson S.N."/>
            <person name="Sutton G.G."/>
            <person name="Wortman J.R."/>
            <person name="Yandell M.D."/>
            <person name="Zhang Q."/>
            <person name="Chen L.X."/>
            <person name="Brandon R.C."/>
            <person name="Rogers Y.-H.C."/>
            <person name="Blazej R.G."/>
            <person name="Champe M."/>
            <person name="Pfeiffer B.D."/>
            <person name="Wan K.H."/>
            <person name="Doyle C."/>
            <person name="Baxter E.G."/>
            <person name="Helt G."/>
            <person name="Nelson C.R."/>
            <person name="Miklos G.L.G."/>
            <person name="Abril J.F."/>
            <person name="Agbayani A."/>
            <person name="An H.-J."/>
            <person name="Andrews-Pfannkoch C."/>
            <person name="Baldwin D."/>
            <person name="Ballew R.M."/>
            <person name="Basu A."/>
            <person name="Baxendale J."/>
            <person name="Bayraktaroglu L."/>
            <person name="Beasley E.M."/>
            <person name="Beeson K.Y."/>
            <person name="Benos P.V."/>
            <person name="Berman B.P."/>
            <person name="Bhandari D."/>
            <person name="Bolshakov S."/>
            <person name="Borkova D."/>
            <person name="Botchan M.R."/>
            <person name="Bouck J."/>
            <person name="Brokstein P."/>
            <person name="Brottier P."/>
            <person name="Burtis K.C."/>
            <person name="Busam D.A."/>
            <person name="Butler H."/>
            <person name="Cadieu E."/>
            <person name="Center A."/>
            <person name="Chandra I."/>
            <person name="Cherry J.M."/>
            <person name="Cawley S."/>
            <person name="Dahlke C."/>
            <person name="Davenport L.B."/>
            <person name="Davies P."/>
            <person name="de Pablos B."/>
            <person name="Delcher A."/>
            <person name="Deng Z."/>
            <person name="Mays A.D."/>
            <person name="Dew I."/>
            <person name="Dietz S.M."/>
            <person name="Dodson K."/>
            <person name="Doup L.E."/>
            <person name="Downes M."/>
            <person name="Dugan-Rocha S."/>
            <person name="Dunkov B.C."/>
            <person name="Dunn P."/>
            <person name="Durbin K.J."/>
            <person name="Evangelista C.C."/>
            <person name="Ferraz C."/>
            <person name="Ferriera S."/>
            <person name="Fleischmann W."/>
            <person name="Fosler C."/>
            <person name="Gabrielian A.E."/>
            <person name="Garg N.S."/>
            <person name="Gelbart W.M."/>
            <person name="Glasser K."/>
            <person name="Glodek A."/>
            <person name="Gong F."/>
            <person name="Gorrell J.H."/>
            <person name="Gu Z."/>
            <person name="Guan P."/>
            <person name="Harris M."/>
            <person name="Harris N.L."/>
            <person name="Harvey D.A."/>
            <person name="Heiman T.J."/>
            <person name="Hernandez J.R."/>
            <person name="Houck J."/>
            <person name="Hostin D."/>
            <person name="Houston K.A."/>
            <person name="Howland T.J."/>
            <person name="Wei M.-H."/>
            <person name="Ibegwam C."/>
            <person name="Jalali M."/>
            <person name="Kalush F."/>
            <person name="Karpen G.H."/>
            <person name="Ke Z."/>
            <person name="Kennison J.A."/>
            <person name="Ketchum K.A."/>
            <person name="Kimmel B.E."/>
            <person name="Kodira C.D."/>
            <person name="Kraft C.L."/>
            <person name="Kravitz S."/>
            <person name="Kulp D."/>
            <person name="Lai Z."/>
            <person name="Lasko P."/>
            <person name="Lei Y."/>
            <person name="Levitsky A.A."/>
            <person name="Li J.H."/>
            <person name="Li Z."/>
            <person name="Liang Y."/>
            <person name="Lin X."/>
            <person name="Liu X."/>
            <person name="Mattei B."/>
            <person name="McIntosh T.C."/>
            <person name="McLeod M.P."/>
            <person name="McPherson D."/>
            <person name="Merkulov G."/>
            <person name="Milshina N.V."/>
            <person name="Mobarry C."/>
            <person name="Morris J."/>
            <person name="Moshrefi A."/>
            <person name="Mount S.M."/>
            <person name="Moy M."/>
            <person name="Murphy B."/>
            <person name="Murphy L."/>
            <person name="Muzny D.M."/>
            <person name="Nelson D.L."/>
            <person name="Nelson D.R."/>
            <person name="Nelson K.A."/>
            <person name="Nixon K."/>
            <person name="Nusskern D.R."/>
            <person name="Pacleb J.M."/>
            <person name="Palazzolo M."/>
            <person name="Pittman G.S."/>
            <person name="Pan S."/>
            <person name="Pollard J."/>
            <person name="Puri V."/>
            <person name="Reese M.G."/>
            <person name="Reinert K."/>
            <person name="Remington K."/>
            <person name="Saunders R.D.C."/>
            <person name="Scheeler F."/>
            <person name="Shen H."/>
            <person name="Shue B.C."/>
            <person name="Siden-Kiamos I."/>
            <person name="Simpson M."/>
            <person name="Skupski M.P."/>
            <person name="Smith T.J."/>
            <person name="Spier E."/>
            <person name="Spradling A.C."/>
            <person name="Stapleton M."/>
            <person name="Strong R."/>
            <person name="Sun E."/>
            <person name="Svirskas R."/>
            <person name="Tector C."/>
            <person name="Turner R."/>
            <person name="Venter E."/>
            <person name="Wang A.H."/>
            <person name="Wang X."/>
            <person name="Wang Z.-Y."/>
            <person name="Wassarman D.A."/>
            <person name="Weinstock G.M."/>
            <person name="Weissenbach J."/>
            <person name="Williams S.M."/>
            <person name="Woodage T."/>
            <person name="Worley K.C."/>
            <person name="Wu D."/>
            <person name="Yang S."/>
            <person name="Yao Q.A."/>
            <person name="Ye J."/>
            <person name="Yeh R.-F."/>
            <person name="Zaveri J.S."/>
            <person name="Zhan M."/>
            <person name="Zhang G."/>
            <person name="Zhao Q."/>
            <person name="Zheng L."/>
            <person name="Zheng X.H."/>
            <person name="Zhong F.N."/>
            <person name="Zhong W."/>
            <person name="Zhou X."/>
            <person name="Zhu S.C."/>
            <person name="Zhu X."/>
            <person name="Smith H.O."/>
            <person name="Gibbs R.A."/>
            <person name="Myers E.W."/>
            <person name="Rubin G.M."/>
            <person name="Venter J.C."/>
        </authorList>
    </citation>
    <scope>NUCLEOTIDE SEQUENCE [LARGE SCALE GENOMIC DNA]</scope>
    <source>
        <strain>Berkeley</strain>
    </source>
</reference>
<reference key="2">
    <citation type="journal article" date="2002" name="Genome Biol.">
        <title>Annotation of the Drosophila melanogaster euchromatic genome: a systematic review.</title>
        <authorList>
            <person name="Misra S."/>
            <person name="Crosby M.A."/>
            <person name="Mungall C.J."/>
            <person name="Matthews B.B."/>
            <person name="Campbell K.S."/>
            <person name="Hradecky P."/>
            <person name="Huang Y."/>
            <person name="Kaminker J.S."/>
            <person name="Millburn G.H."/>
            <person name="Prochnik S.E."/>
            <person name="Smith C.D."/>
            <person name="Tupy J.L."/>
            <person name="Whitfield E.J."/>
            <person name="Bayraktaroglu L."/>
            <person name="Berman B.P."/>
            <person name="Bettencourt B.R."/>
            <person name="Celniker S.E."/>
            <person name="de Grey A.D.N.J."/>
            <person name="Drysdale R.A."/>
            <person name="Harris N.L."/>
            <person name="Richter J."/>
            <person name="Russo S."/>
            <person name="Schroeder A.J."/>
            <person name="Shu S.Q."/>
            <person name="Stapleton M."/>
            <person name="Yamada C."/>
            <person name="Ashburner M."/>
            <person name="Gelbart W.M."/>
            <person name="Rubin G.M."/>
            <person name="Lewis S.E."/>
        </authorList>
    </citation>
    <scope>GENOME REANNOTATION</scope>
    <source>
        <strain>Berkeley</strain>
    </source>
</reference>
<reference key="3">
    <citation type="journal article" date="2002" name="Genome Biol.">
        <title>A Drosophila full-length cDNA resource.</title>
        <authorList>
            <person name="Stapleton M."/>
            <person name="Carlson J.W."/>
            <person name="Brokstein P."/>
            <person name="Yu C."/>
            <person name="Champe M."/>
            <person name="George R.A."/>
            <person name="Guarin H."/>
            <person name="Kronmiller B."/>
            <person name="Pacleb J.M."/>
            <person name="Park S."/>
            <person name="Wan K.H."/>
            <person name="Rubin G.M."/>
            <person name="Celniker S.E."/>
        </authorList>
    </citation>
    <scope>NUCLEOTIDE SEQUENCE [LARGE SCALE MRNA]</scope>
    <source>
        <strain>Berkeley</strain>
        <tissue>Embryo</tissue>
    </source>
</reference>
<reference key="4">
    <citation type="journal article" date="2014" name="Mol. Biol. Cell">
        <title>MRM2 and MRM3 are involved in biogenesis of the large subunit of the mitochondrial ribosome.</title>
        <authorList>
            <person name="Rorbach J."/>
            <person name="Boesch P."/>
            <person name="Gammage P.A."/>
            <person name="Nicholls T.J."/>
            <person name="Pearce S.F."/>
            <person name="Patel D."/>
            <person name="Hauser A."/>
            <person name="Perocchi F."/>
            <person name="Minczuk M."/>
        </authorList>
    </citation>
    <scope>POSITION OF MODIFIED METHYLURIDINE IN MTLSU RRNA</scope>
</reference>
<reference key="5">
    <citation type="journal article" date="2022" name="Nat. Commun.">
        <title>A late-stage assembly checkpoint of the human mitochondrial ribosome large subunit.</title>
        <authorList>
            <person name="Rebelo-Guiomar P."/>
            <person name="Pellegrino S."/>
            <person name="Dent K.C."/>
            <person name="Sas-Chen A."/>
            <person name="Miller-Fleming L."/>
            <person name="Garone C."/>
            <person name="Van Haute L."/>
            <person name="Rogan J.F."/>
            <person name="Dinan A."/>
            <person name="Firth A.E."/>
            <person name="Andrews B."/>
            <person name="Whitworth A.J."/>
            <person name="Schwartz S."/>
            <person name="Warren A.J."/>
            <person name="Minczuk M."/>
        </authorList>
    </citation>
    <scope>DISRUPTION PHENOTYPE</scope>
</reference>
<comment type="function">
    <text evidence="2 7">S-adenosyl-L-methionine-dependent 2'-O-ribose methyltransferase that catalyzes the formation of 2'-O-methyluridine at position 1579 (Um1579) in the mitochondrial large subunit ribosomal RNA (mtLSU rRNA), a universally conserved modification in the peptidyl transferase domain of the mtLSU rRNA. This activity may require prior 2'-O-methylguanosine modification at position 1580 (Gm1580) by MRM3. Essential for late-stage assembly of mtLSU required for efficient translation of mitochondrial DNA encoded proteins; methyltransferase activity is not required for this function. Essential for mitochondrial respiratory function.</text>
</comment>
<comment type="catalytic activity">
    <reaction evidence="2">
        <text>a uridine in rRNA + S-adenosyl-L-methionine = a 2'-O-methyluridine in rRNA + S-adenosyl-L-homocysteine + H(+)</text>
        <dbReference type="Rhea" id="RHEA:54152"/>
        <dbReference type="Rhea" id="RHEA-COMP:13812"/>
        <dbReference type="Rhea" id="RHEA-COMP:13814"/>
        <dbReference type="ChEBI" id="CHEBI:15378"/>
        <dbReference type="ChEBI" id="CHEBI:57856"/>
        <dbReference type="ChEBI" id="CHEBI:59789"/>
        <dbReference type="ChEBI" id="CHEBI:65315"/>
        <dbReference type="ChEBI" id="CHEBI:74478"/>
    </reaction>
</comment>
<comment type="subcellular location">
    <subcellularLocation>
        <location evidence="2">Mitochondrion</location>
    </subcellularLocation>
</comment>
<comment type="disruption phenotype">
    <text evidence="4">RNAi-mediated knock down is larval to late pupal lethal with developmental delay (PubMed:35177605). Escaper adults show wing deformation and flattened abdomen, and most are unable to emerge from pupae or get stuck in the food medium due to weakness (PubMed:35177605). Conditional muscle specific RNAi-mediated knockdown results in impaired locomotor ability (PubMed:35177605).</text>
</comment>
<comment type="similarity">
    <text evidence="6">Belongs to the class I-like SAM-binding methyltransferase superfamily. RNA methyltransferase RlmE family.</text>
</comment>
<accession>Q9VDT6</accession>
<evidence type="ECO:0000250" key="1">
    <source>
        <dbReference type="UniProtKB" id="P0C0R7"/>
    </source>
</evidence>
<evidence type="ECO:0000250" key="2">
    <source>
        <dbReference type="UniProtKB" id="Q9UI43"/>
    </source>
</evidence>
<evidence type="ECO:0000255" key="3"/>
<evidence type="ECO:0000269" key="4">
    <source>
    </source>
</evidence>
<evidence type="ECO:0000303" key="5">
    <source>
    </source>
</evidence>
<evidence type="ECO:0000305" key="6"/>
<evidence type="ECO:0000305" key="7">
    <source>
    </source>
</evidence>
<evidence type="ECO:0000312" key="8">
    <source>
        <dbReference type="FlyBase" id="FBgn0038737"/>
    </source>
</evidence>
<evidence type="ECO:0000312" key="9">
    <source>
        <dbReference type="Proteomes" id="UP000000803"/>
    </source>
</evidence>
<gene>
    <name evidence="8" type="primary">Mrm2</name>
    <name evidence="8" type="ORF">CG11447</name>
</gene>
<feature type="transit peptide" description="Mitochondrion" evidence="3">
    <location>
        <begin position="1"/>
        <end position="35"/>
    </location>
</feature>
<feature type="chain" id="PRO_0000155584" description="rRNA methyltransferase 2, mitochondrial">
    <location>
        <begin position="36"/>
        <end position="250"/>
    </location>
</feature>
<feature type="active site" description="Proton acceptor" evidence="1">
    <location>
        <position position="201"/>
    </location>
</feature>
<feature type="binding site" evidence="2">
    <location>
        <begin position="90"/>
        <end position="93"/>
    </location>
    <ligand>
        <name>S-adenosyl-L-methionine</name>
        <dbReference type="ChEBI" id="CHEBI:59789"/>
    </ligand>
</feature>
<feature type="binding site" evidence="2">
    <location>
        <position position="119"/>
    </location>
    <ligand>
        <name>S-adenosyl-L-methionine</name>
        <dbReference type="ChEBI" id="CHEBI:59789"/>
    </ligand>
</feature>
<feature type="binding site" evidence="2">
    <location>
        <begin position="136"/>
        <end position="137"/>
    </location>
    <ligand>
        <name>S-adenosyl-L-methionine</name>
        <dbReference type="ChEBI" id="CHEBI:59789"/>
    </ligand>
</feature>
<feature type="binding site" evidence="2">
    <location>
        <position position="161"/>
    </location>
    <ligand>
        <name>S-adenosyl-L-methionine</name>
        <dbReference type="ChEBI" id="CHEBI:59789"/>
    </ligand>
</feature>
<keyword id="KW-0489">Methyltransferase</keyword>
<keyword id="KW-0496">Mitochondrion</keyword>
<keyword id="KW-1185">Reference proteome</keyword>
<keyword id="KW-0698">rRNA processing</keyword>
<keyword id="KW-0949">S-adenosyl-L-methionine</keyword>
<keyword id="KW-0808">Transferase</keyword>
<keyword id="KW-0809">Transit peptide</keyword>
<proteinExistence type="evidence at transcript level"/>
<organism evidence="9">
    <name type="scientific">Drosophila melanogaster</name>
    <name type="common">Fruit fly</name>
    <dbReference type="NCBI Taxonomy" id="7227"/>
    <lineage>
        <taxon>Eukaryota</taxon>
        <taxon>Metazoa</taxon>
        <taxon>Ecdysozoa</taxon>
        <taxon>Arthropoda</taxon>
        <taxon>Hexapoda</taxon>
        <taxon>Insecta</taxon>
        <taxon>Pterygota</taxon>
        <taxon>Neoptera</taxon>
        <taxon>Endopterygota</taxon>
        <taxon>Diptera</taxon>
        <taxon>Brachycera</taxon>
        <taxon>Muscomorpha</taxon>
        <taxon>Ephydroidea</taxon>
        <taxon>Drosophilidae</taxon>
        <taxon>Drosophila</taxon>
        <taxon>Sophophora</taxon>
    </lineage>
</organism>
<protein>
    <recommendedName>
        <fullName evidence="2">rRNA methyltransferase 2, mitochondrial</fullName>
        <shortName evidence="5">dmMRM2</shortName>
        <ecNumber evidence="2">2.1.1.-</ecNumber>
    </recommendedName>
    <alternativeName>
        <fullName evidence="2">rRNA (uridine-2'-O)-methyltransferase</fullName>
    </alternativeName>
</protein>
<dbReference type="EC" id="2.1.1.-" evidence="2"/>
<dbReference type="EMBL" id="AE014297">
    <property type="protein sequence ID" value="AAF55704.1"/>
    <property type="molecule type" value="Genomic_DNA"/>
</dbReference>
<dbReference type="EMBL" id="AY071418">
    <property type="protein sequence ID" value="AAL49040.1"/>
    <property type="molecule type" value="mRNA"/>
</dbReference>
<dbReference type="RefSeq" id="NP_650835.1">
    <property type="nucleotide sequence ID" value="NM_142578.4"/>
</dbReference>
<dbReference type="SMR" id="Q9VDT6"/>
<dbReference type="BioGRID" id="67349">
    <property type="interactions" value="5"/>
</dbReference>
<dbReference type="FunCoup" id="Q9VDT6">
    <property type="interactions" value="1783"/>
</dbReference>
<dbReference type="IntAct" id="Q9VDT6">
    <property type="interactions" value="5"/>
</dbReference>
<dbReference type="STRING" id="7227.FBpp0083225"/>
<dbReference type="PaxDb" id="7227-FBpp0083225"/>
<dbReference type="DNASU" id="42359"/>
<dbReference type="EnsemblMetazoa" id="FBtr0083815">
    <property type="protein sequence ID" value="FBpp0083225"/>
    <property type="gene ID" value="FBgn0038737"/>
</dbReference>
<dbReference type="GeneID" id="42359"/>
<dbReference type="KEGG" id="dme:Dmel_CG11447"/>
<dbReference type="UCSC" id="CG11447-RA">
    <property type="organism name" value="d. melanogaster"/>
</dbReference>
<dbReference type="AGR" id="FB:FBgn0038737"/>
<dbReference type="CTD" id="29960"/>
<dbReference type="FlyBase" id="FBgn0038737">
    <property type="gene designation" value="Mrm2"/>
</dbReference>
<dbReference type="VEuPathDB" id="VectorBase:FBgn0038737"/>
<dbReference type="eggNOG" id="KOG4589">
    <property type="taxonomic scope" value="Eukaryota"/>
</dbReference>
<dbReference type="GeneTree" id="ENSGT00730000111241"/>
<dbReference type="HOGENOM" id="CLU_009422_4_2_1"/>
<dbReference type="InParanoid" id="Q9VDT6"/>
<dbReference type="OMA" id="HRQTDHL"/>
<dbReference type="OrthoDB" id="20105at2759"/>
<dbReference type="PhylomeDB" id="Q9VDT6"/>
<dbReference type="BioGRID-ORCS" id="42359">
    <property type="hits" value="0 hits in 1 CRISPR screen"/>
</dbReference>
<dbReference type="GenomeRNAi" id="42359"/>
<dbReference type="PRO" id="PR:Q9VDT6"/>
<dbReference type="Proteomes" id="UP000000803">
    <property type="component" value="Chromosome 3R"/>
</dbReference>
<dbReference type="Bgee" id="FBgn0038737">
    <property type="expression patterns" value="Expressed in adult anterior midgut class II enteroendocrine cell in adult midgut (Drosophila) and 58 other cell types or tissues"/>
</dbReference>
<dbReference type="GO" id="GO:0005759">
    <property type="term" value="C:mitochondrial matrix"/>
    <property type="evidence" value="ECO:0000305"/>
    <property type="project" value="FlyBase"/>
</dbReference>
<dbReference type="GO" id="GO:0005739">
    <property type="term" value="C:mitochondrion"/>
    <property type="evidence" value="ECO:0000318"/>
    <property type="project" value="GO_Central"/>
</dbReference>
<dbReference type="GO" id="GO:0008650">
    <property type="term" value="F:rRNA (uridine-2'-O-)-methyltransferase activity"/>
    <property type="evidence" value="ECO:0000250"/>
    <property type="project" value="FlyBase"/>
</dbReference>
<dbReference type="GO" id="GO:1902775">
    <property type="term" value="P:mitochondrial large ribosomal subunit assembly"/>
    <property type="evidence" value="ECO:0000315"/>
    <property type="project" value="FlyBase"/>
</dbReference>
<dbReference type="GO" id="GO:0001510">
    <property type="term" value="P:RNA methylation"/>
    <property type="evidence" value="ECO:0000318"/>
    <property type="project" value="GO_Central"/>
</dbReference>
<dbReference type="GO" id="GO:0006364">
    <property type="term" value="P:rRNA processing"/>
    <property type="evidence" value="ECO:0000250"/>
    <property type="project" value="FlyBase"/>
</dbReference>
<dbReference type="FunFam" id="3.40.50.150:FF:000129">
    <property type="entry name" value="Mitochondrial rRNA methyltransferase 2"/>
    <property type="match status" value="1"/>
</dbReference>
<dbReference type="Gene3D" id="3.40.50.150">
    <property type="entry name" value="Vaccinia Virus protein VP39"/>
    <property type="match status" value="1"/>
</dbReference>
<dbReference type="HAMAP" id="MF_01547">
    <property type="entry name" value="RNA_methyltr_E"/>
    <property type="match status" value="1"/>
</dbReference>
<dbReference type="InterPro" id="IPR050082">
    <property type="entry name" value="RNA_methyltr_RlmE"/>
</dbReference>
<dbReference type="InterPro" id="IPR002877">
    <property type="entry name" value="RNA_MeTrfase_FtsJ_dom"/>
</dbReference>
<dbReference type="InterPro" id="IPR015507">
    <property type="entry name" value="rRNA-MeTfrase_E"/>
</dbReference>
<dbReference type="InterPro" id="IPR029063">
    <property type="entry name" value="SAM-dependent_MTases_sf"/>
</dbReference>
<dbReference type="PANTHER" id="PTHR10920">
    <property type="entry name" value="RIBOSOMAL RNA METHYLTRANSFERASE"/>
    <property type="match status" value="1"/>
</dbReference>
<dbReference type="PANTHER" id="PTHR10920:SF18">
    <property type="entry name" value="RRNA METHYLTRANSFERASE 2, MITOCHONDRIAL"/>
    <property type="match status" value="1"/>
</dbReference>
<dbReference type="Pfam" id="PF01728">
    <property type="entry name" value="FtsJ"/>
    <property type="match status" value="1"/>
</dbReference>
<dbReference type="PIRSF" id="PIRSF005461">
    <property type="entry name" value="23S_rRNA_mtase"/>
    <property type="match status" value="1"/>
</dbReference>
<dbReference type="SUPFAM" id="SSF53335">
    <property type="entry name" value="S-adenosyl-L-methionine-dependent methyltransferases"/>
    <property type="match status" value="1"/>
</dbReference>